<keyword id="KW-0963">Cytoplasm</keyword>
<keyword id="KW-0255">Endonuclease</keyword>
<keyword id="KW-0378">Hydrolase</keyword>
<keyword id="KW-0460">Magnesium</keyword>
<keyword id="KW-0479">Metal-binding</keyword>
<keyword id="KW-0507">mRNA processing</keyword>
<keyword id="KW-0540">Nuclease</keyword>
<keyword id="KW-0694">RNA-binding</keyword>
<keyword id="KW-0698">rRNA processing</keyword>
<keyword id="KW-0699">rRNA-binding</keyword>
<keyword id="KW-0819">tRNA processing</keyword>
<dbReference type="EC" id="3.1.26.3" evidence="1"/>
<dbReference type="EMBL" id="AM884176">
    <property type="protein sequence ID" value="CAP03989.1"/>
    <property type="molecule type" value="Genomic_DNA"/>
</dbReference>
<dbReference type="RefSeq" id="WP_009872536.1">
    <property type="nucleotide sequence ID" value="NC_010287.1"/>
</dbReference>
<dbReference type="RefSeq" id="YP_001654626.1">
    <property type="nucleotide sequence ID" value="NC_010287.1"/>
</dbReference>
<dbReference type="SMR" id="B0B7L3"/>
<dbReference type="KEGG" id="ctb:CTL0549"/>
<dbReference type="PATRIC" id="fig|471472.4.peg.590"/>
<dbReference type="HOGENOM" id="CLU_000907_1_3_0"/>
<dbReference type="Proteomes" id="UP001154402">
    <property type="component" value="Chromosome"/>
</dbReference>
<dbReference type="GO" id="GO:0005737">
    <property type="term" value="C:cytoplasm"/>
    <property type="evidence" value="ECO:0007669"/>
    <property type="project" value="UniProtKB-SubCell"/>
</dbReference>
<dbReference type="GO" id="GO:0003725">
    <property type="term" value="F:double-stranded RNA binding"/>
    <property type="evidence" value="ECO:0007669"/>
    <property type="project" value="TreeGrafter"/>
</dbReference>
<dbReference type="GO" id="GO:0046872">
    <property type="term" value="F:metal ion binding"/>
    <property type="evidence" value="ECO:0007669"/>
    <property type="project" value="UniProtKB-KW"/>
</dbReference>
<dbReference type="GO" id="GO:0004525">
    <property type="term" value="F:ribonuclease III activity"/>
    <property type="evidence" value="ECO:0007669"/>
    <property type="project" value="UniProtKB-UniRule"/>
</dbReference>
<dbReference type="GO" id="GO:0019843">
    <property type="term" value="F:rRNA binding"/>
    <property type="evidence" value="ECO:0007669"/>
    <property type="project" value="UniProtKB-KW"/>
</dbReference>
<dbReference type="GO" id="GO:0006397">
    <property type="term" value="P:mRNA processing"/>
    <property type="evidence" value="ECO:0007669"/>
    <property type="project" value="UniProtKB-UniRule"/>
</dbReference>
<dbReference type="GO" id="GO:0010468">
    <property type="term" value="P:regulation of gene expression"/>
    <property type="evidence" value="ECO:0007669"/>
    <property type="project" value="TreeGrafter"/>
</dbReference>
<dbReference type="GO" id="GO:0006364">
    <property type="term" value="P:rRNA processing"/>
    <property type="evidence" value="ECO:0007669"/>
    <property type="project" value="UniProtKB-UniRule"/>
</dbReference>
<dbReference type="GO" id="GO:0008033">
    <property type="term" value="P:tRNA processing"/>
    <property type="evidence" value="ECO:0007669"/>
    <property type="project" value="UniProtKB-KW"/>
</dbReference>
<dbReference type="CDD" id="cd10845">
    <property type="entry name" value="DSRM_RNAse_III_family"/>
    <property type="match status" value="1"/>
</dbReference>
<dbReference type="CDD" id="cd00593">
    <property type="entry name" value="RIBOc"/>
    <property type="match status" value="1"/>
</dbReference>
<dbReference type="FunFam" id="1.10.1520.10:FF:000027">
    <property type="entry name" value="Ribonuclease 3"/>
    <property type="match status" value="1"/>
</dbReference>
<dbReference type="FunFam" id="3.30.160.20:FF:000083">
    <property type="entry name" value="Ribonuclease 3"/>
    <property type="match status" value="1"/>
</dbReference>
<dbReference type="Gene3D" id="3.30.160.20">
    <property type="match status" value="1"/>
</dbReference>
<dbReference type="Gene3D" id="1.10.1520.10">
    <property type="entry name" value="Ribonuclease III domain"/>
    <property type="match status" value="1"/>
</dbReference>
<dbReference type="HAMAP" id="MF_00104">
    <property type="entry name" value="RNase_III"/>
    <property type="match status" value="1"/>
</dbReference>
<dbReference type="InterPro" id="IPR014720">
    <property type="entry name" value="dsRBD_dom"/>
</dbReference>
<dbReference type="InterPro" id="IPR011907">
    <property type="entry name" value="RNase_III"/>
</dbReference>
<dbReference type="InterPro" id="IPR000999">
    <property type="entry name" value="RNase_III_dom"/>
</dbReference>
<dbReference type="InterPro" id="IPR036389">
    <property type="entry name" value="RNase_III_sf"/>
</dbReference>
<dbReference type="NCBIfam" id="TIGR02191">
    <property type="entry name" value="RNaseIII"/>
    <property type="match status" value="1"/>
</dbReference>
<dbReference type="PANTHER" id="PTHR11207:SF0">
    <property type="entry name" value="RIBONUCLEASE 3"/>
    <property type="match status" value="1"/>
</dbReference>
<dbReference type="PANTHER" id="PTHR11207">
    <property type="entry name" value="RIBONUCLEASE III"/>
    <property type="match status" value="1"/>
</dbReference>
<dbReference type="Pfam" id="PF00035">
    <property type="entry name" value="dsrm"/>
    <property type="match status" value="1"/>
</dbReference>
<dbReference type="Pfam" id="PF14622">
    <property type="entry name" value="Ribonucleas_3_3"/>
    <property type="match status" value="1"/>
</dbReference>
<dbReference type="SMART" id="SM00358">
    <property type="entry name" value="DSRM"/>
    <property type="match status" value="1"/>
</dbReference>
<dbReference type="SMART" id="SM00535">
    <property type="entry name" value="RIBOc"/>
    <property type="match status" value="1"/>
</dbReference>
<dbReference type="SUPFAM" id="SSF54768">
    <property type="entry name" value="dsRNA-binding domain-like"/>
    <property type="match status" value="1"/>
</dbReference>
<dbReference type="SUPFAM" id="SSF69065">
    <property type="entry name" value="RNase III domain-like"/>
    <property type="match status" value="1"/>
</dbReference>
<dbReference type="PROSITE" id="PS50137">
    <property type="entry name" value="DS_RBD"/>
    <property type="match status" value="1"/>
</dbReference>
<dbReference type="PROSITE" id="PS00517">
    <property type="entry name" value="RNASE_3_1"/>
    <property type="match status" value="1"/>
</dbReference>
<dbReference type="PROSITE" id="PS50142">
    <property type="entry name" value="RNASE_3_2"/>
    <property type="match status" value="1"/>
</dbReference>
<organism>
    <name type="scientific">Chlamydia trachomatis serovar L2 (strain ATCC VR-902B / DSM 19102 / 434/Bu)</name>
    <dbReference type="NCBI Taxonomy" id="471472"/>
    <lineage>
        <taxon>Bacteria</taxon>
        <taxon>Pseudomonadati</taxon>
        <taxon>Chlamydiota</taxon>
        <taxon>Chlamydiia</taxon>
        <taxon>Chlamydiales</taxon>
        <taxon>Chlamydiaceae</taxon>
        <taxon>Chlamydia/Chlamydophila group</taxon>
        <taxon>Chlamydia</taxon>
    </lineage>
</organism>
<reference key="1">
    <citation type="journal article" date="2008" name="Genome Res.">
        <title>Chlamydia trachomatis: genome sequence analysis of lymphogranuloma venereum isolates.</title>
        <authorList>
            <person name="Thomson N.R."/>
            <person name="Holden M.T.G."/>
            <person name="Carder C."/>
            <person name="Lennard N."/>
            <person name="Lockey S.J."/>
            <person name="Marsh P."/>
            <person name="Skipp P."/>
            <person name="O'Connor C.D."/>
            <person name="Goodhead I."/>
            <person name="Norbertzcak H."/>
            <person name="Harris B."/>
            <person name="Ormond D."/>
            <person name="Rance R."/>
            <person name="Quail M.A."/>
            <person name="Parkhill J."/>
            <person name="Stephens R.S."/>
            <person name="Clarke I.N."/>
        </authorList>
    </citation>
    <scope>NUCLEOTIDE SEQUENCE [LARGE SCALE GENOMIC DNA]</scope>
    <source>
        <strain>ATCC VR-902B / DSM 19102 / 434/Bu</strain>
    </source>
</reference>
<feature type="chain" id="PRO_1000094099" description="Ribonuclease 3">
    <location>
        <begin position="1"/>
        <end position="231"/>
    </location>
</feature>
<feature type="domain" description="RNase III" evidence="1">
    <location>
        <begin position="7"/>
        <end position="135"/>
    </location>
</feature>
<feature type="domain" description="DRBM" evidence="1">
    <location>
        <begin position="160"/>
        <end position="229"/>
    </location>
</feature>
<feature type="active site" evidence="1">
    <location>
        <position position="52"/>
    </location>
</feature>
<feature type="active site" evidence="1">
    <location>
        <position position="124"/>
    </location>
</feature>
<feature type="binding site" evidence="1">
    <location>
        <position position="48"/>
    </location>
    <ligand>
        <name>Mg(2+)</name>
        <dbReference type="ChEBI" id="CHEBI:18420"/>
    </ligand>
</feature>
<feature type="binding site" evidence="1">
    <location>
        <position position="121"/>
    </location>
    <ligand>
        <name>Mg(2+)</name>
        <dbReference type="ChEBI" id="CHEBI:18420"/>
    </ligand>
</feature>
<feature type="binding site" evidence="1">
    <location>
        <position position="124"/>
    </location>
    <ligand>
        <name>Mg(2+)</name>
        <dbReference type="ChEBI" id="CHEBI:18420"/>
    </ligand>
</feature>
<gene>
    <name evidence="1" type="primary">rnc</name>
    <name type="ordered locus">CTL0549</name>
</gene>
<evidence type="ECO:0000255" key="1">
    <source>
        <dbReference type="HAMAP-Rule" id="MF_00104"/>
    </source>
</evidence>
<sequence>MQHTVDIQAIESKLNFTFSHPRLLITALTHPSYRNEFPSAEEDSERLEFLGDAVLGLVVTEHLFLLFPALNEGLLSTTRAALVNAEACFEYTQKLSLGEHLLIGRGEKMQSHRGKISAYANLFEAILGAVYLDGGLSPARQIIVPLLPDKESILPLMLVNPKNRLQQFTQQTLKVLPSYKALPWKSEDGSPGYHVQVFVNGDLWGEGFAGSKKEAEKLAAKQALSTHDNKN</sequence>
<accession>B0B7L3</accession>
<comment type="function">
    <text evidence="1">Digests double-stranded RNA. Involved in the processing of primary rRNA transcript to yield the immediate precursors to the large and small rRNAs (23S and 16S). Processes some mRNAs, and tRNAs when they are encoded in the rRNA operon. Processes pre-crRNA and tracrRNA of type II CRISPR loci if present in the organism.</text>
</comment>
<comment type="catalytic activity">
    <reaction evidence="1">
        <text>Endonucleolytic cleavage to 5'-phosphomonoester.</text>
        <dbReference type="EC" id="3.1.26.3"/>
    </reaction>
</comment>
<comment type="cofactor">
    <cofactor evidence="1">
        <name>Mg(2+)</name>
        <dbReference type="ChEBI" id="CHEBI:18420"/>
    </cofactor>
</comment>
<comment type="subunit">
    <text evidence="1">Homodimer.</text>
</comment>
<comment type="subcellular location">
    <subcellularLocation>
        <location evidence="1">Cytoplasm</location>
    </subcellularLocation>
</comment>
<comment type="similarity">
    <text evidence="1">Belongs to the ribonuclease III family.</text>
</comment>
<proteinExistence type="inferred from homology"/>
<protein>
    <recommendedName>
        <fullName evidence="1">Ribonuclease 3</fullName>
        <ecNumber evidence="1">3.1.26.3</ecNumber>
    </recommendedName>
    <alternativeName>
        <fullName evidence="1">Ribonuclease III</fullName>
        <shortName evidence="1">RNase III</shortName>
    </alternativeName>
</protein>
<name>RNC_CHLT2</name>